<protein>
    <recommendedName>
        <fullName evidence="2">Chaperonin-containing T-complex member BBS12</fullName>
    </recommendedName>
    <alternativeName>
        <fullName>Bardet-Biedl syndrome 12 protein homolog</fullName>
    </alternativeName>
</protein>
<dbReference type="EMBL" id="CR858418">
    <property type="protein sequence ID" value="CAH90648.1"/>
    <property type="molecule type" value="mRNA"/>
</dbReference>
<dbReference type="EMBL" id="CR861156">
    <property type="protein sequence ID" value="CAH93230.1"/>
    <property type="molecule type" value="mRNA"/>
</dbReference>
<dbReference type="FunCoup" id="Q5RC62">
    <property type="interactions" value="199"/>
</dbReference>
<dbReference type="STRING" id="9601.ENSPPYP00000016807"/>
<dbReference type="eggNOG" id="ENOG502QUYD">
    <property type="taxonomic scope" value="Eukaryota"/>
</dbReference>
<dbReference type="InParanoid" id="Q5RC62"/>
<dbReference type="Proteomes" id="UP000001595">
    <property type="component" value="Unplaced"/>
</dbReference>
<dbReference type="GO" id="GO:0005929">
    <property type="term" value="C:cilium"/>
    <property type="evidence" value="ECO:0007669"/>
    <property type="project" value="UniProtKB-SubCell"/>
</dbReference>
<dbReference type="GO" id="GO:0005524">
    <property type="term" value="F:ATP binding"/>
    <property type="evidence" value="ECO:0007669"/>
    <property type="project" value="InterPro"/>
</dbReference>
<dbReference type="GO" id="GO:0051131">
    <property type="term" value="P:chaperone-mediated protein complex assembly"/>
    <property type="evidence" value="ECO:0007669"/>
    <property type="project" value="InterPro"/>
</dbReference>
<dbReference type="GO" id="GO:0045494">
    <property type="term" value="P:photoreceptor cell maintenance"/>
    <property type="evidence" value="ECO:0007669"/>
    <property type="project" value="TreeGrafter"/>
</dbReference>
<dbReference type="FunFam" id="1.10.560.10:FF:000044">
    <property type="entry name" value="Bardet-Biedl syndrome 12 protein"/>
    <property type="match status" value="1"/>
</dbReference>
<dbReference type="FunFam" id="3.50.7.10:FF:000021">
    <property type="entry name" value="Bardet-Biedl syndrome 12 protein homolog"/>
    <property type="match status" value="1"/>
</dbReference>
<dbReference type="Gene3D" id="3.50.7.10">
    <property type="entry name" value="GroEL"/>
    <property type="match status" value="1"/>
</dbReference>
<dbReference type="Gene3D" id="1.10.560.10">
    <property type="entry name" value="GroEL-like equatorial domain"/>
    <property type="match status" value="2"/>
</dbReference>
<dbReference type="Gene3D" id="3.30.260.10">
    <property type="entry name" value="TCP-1-like chaperonin intermediate domain"/>
    <property type="match status" value="1"/>
</dbReference>
<dbReference type="InterPro" id="IPR042984">
    <property type="entry name" value="BBS12"/>
</dbReference>
<dbReference type="InterPro" id="IPR002423">
    <property type="entry name" value="Cpn60/GroEL/TCP-1"/>
</dbReference>
<dbReference type="InterPro" id="IPR027409">
    <property type="entry name" value="GroEL-like_apical_dom_sf"/>
</dbReference>
<dbReference type="InterPro" id="IPR027413">
    <property type="entry name" value="GROEL-like_equatorial_sf"/>
</dbReference>
<dbReference type="InterPro" id="IPR027410">
    <property type="entry name" value="TCP-1-like_intermed_sf"/>
</dbReference>
<dbReference type="PANTHER" id="PTHR46883">
    <property type="entry name" value="BARDET-BIEDL SYNDROME 12 PROTEIN"/>
    <property type="match status" value="1"/>
</dbReference>
<dbReference type="PANTHER" id="PTHR46883:SF1">
    <property type="entry name" value="BARDET-BIEDL SYNDROME 12 PROTEIN"/>
    <property type="match status" value="1"/>
</dbReference>
<dbReference type="Pfam" id="PF00118">
    <property type="entry name" value="Cpn60_TCP1"/>
    <property type="match status" value="1"/>
</dbReference>
<dbReference type="SUPFAM" id="SSF52029">
    <property type="entry name" value="GroEL apical domain-like"/>
    <property type="match status" value="1"/>
</dbReference>
<dbReference type="SUPFAM" id="SSF48592">
    <property type="entry name" value="GroEL equatorial domain-like"/>
    <property type="match status" value="1"/>
</dbReference>
<name>BBS12_PONAB</name>
<comment type="function">
    <text evidence="1">Component of the chaperonin-containing T-complex (TRiC), a molecular chaperone complex that assists the folding of proteins upon ATP hydrolysis. As part of the TRiC complex may play a role in the assembly of BBSome, a complex involved in ciliogenesis regulating transports vesicles to the cilia. Involved in adipogenic differentiation.</text>
</comment>
<comment type="subunit">
    <text evidence="1">Component of the chaperonin-containing T-complex (TRiC), a heterooligomeric complex of about 850 to 900 kDa that forms two stacked rings, 12 to 16 nm in diameter. Interacts with MKKS.</text>
</comment>
<comment type="subcellular location">
    <subcellularLocation>
        <location evidence="1">Cell projection</location>
        <location evidence="1">Cilium</location>
    </subcellularLocation>
    <text evidence="1">Located within the basal body of the primary cilium of differentiating preadipocytes.</text>
</comment>
<comment type="similarity">
    <text evidence="2">Belongs to the TCP-1 chaperonin family. BBS12 subfamily.</text>
</comment>
<reference key="1">
    <citation type="submission" date="2004-11" db="EMBL/GenBank/DDBJ databases">
        <authorList>
            <consortium name="The German cDNA consortium"/>
        </authorList>
    </citation>
    <scope>NUCLEOTIDE SEQUENCE [LARGE SCALE MRNA]</scope>
    <source>
        <tissue>Brain cortex</tissue>
        <tissue>Heart</tissue>
    </source>
</reference>
<gene>
    <name type="primary">BBS12</name>
</gene>
<keyword id="KW-0966">Cell projection</keyword>
<keyword id="KW-0969">Cilium</keyword>
<keyword id="KW-1185">Reference proteome</keyword>
<accession>Q5RC62</accession>
<accession>Q5R4T6</accession>
<organism>
    <name type="scientific">Pongo abelii</name>
    <name type="common">Sumatran orangutan</name>
    <name type="synonym">Pongo pygmaeus abelii</name>
    <dbReference type="NCBI Taxonomy" id="9601"/>
    <lineage>
        <taxon>Eukaryota</taxon>
        <taxon>Metazoa</taxon>
        <taxon>Chordata</taxon>
        <taxon>Craniata</taxon>
        <taxon>Vertebrata</taxon>
        <taxon>Euteleostomi</taxon>
        <taxon>Mammalia</taxon>
        <taxon>Eutheria</taxon>
        <taxon>Euarchontoglires</taxon>
        <taxon>Primates</taxon>
        <taxon>Haplorrhini</taxon>
        <taxon>Catarrhini</taxon>
        <taxon>Hominidae</taxon>
        <taxon>Pongo</taxon>
    </lineage>
</organism>
<evidence type="ECO:0000250" key="1">
    <source>
        <dbReference type="UniProtKB" id="Q6ZW61"/>
    </source>
</evidence>
<evidence type="ECO:0000305" key="2"/>
<feature type="chain" id="PRO_0000301983" description="Chaperonin-containing T-complex member BBS12">
    <location>
        <begin position="1"/>
        <end position="710"/>
    </location>
</feature>
<feature type="sequence conflict" description="In Ref. 1; CAH93230." evidence="2" ref="1">
    <original>H</original>
    <variation>L</variation>
    <location>
        <position position="260"/>
    </location>
</feature>
<feature type="sequence conflict" description="In Ref. 1; CAH93230." evidence="2" ref="1">
    <original>D</original>
    <variation>G</variation>
    <location>
        <position position="267"/>
    </location>
</feature>
<feature type="sequence conflict" description="In Ref. 1; CAH93230." evidence="2" ref="1">
    <original>E</original>
    <variation>A</variation>
    <location>
        <position position="288"/>
    </location>
</feature>
<feature type="sequence conflict" description="In Ref. 1; CAH93230." evidence="2" ref="1">
    <original>N</original>
    <variation>I</variation>
    <location>
        <position position="343"/>
    </location>
</feature>
<feature type="sequence conflict" description="In Ref. 1; CAH93230." evidence="2" ref="1">
    <original>Q</original>
    <variation>R</variation>
    <location>
        <position position="352"/>
    </location>
</feature>
<feature type="sequence conflict" description="In Ref. 1; CAH93230." evidence="2" ref="1">
    <original>Q</original>
    <variation>E</variation>
    <location>
        <position position="386"/>
    </location>
</feature>
<feature type="sequence conflict" description="In Ref. 1; CAH93230." evidence="2" ref="1">
    <original>E</original>
    <variation>G</variation>
    <location>
        <position position="462"/>
    </location>
</feature>
<feature type="sequence conflict" description="In Ref. 1; CAH93230." evidence="2" ref="1">
    <original>D</original>
    <variation>N</variation>
    <location>
        <position position="467"/>
    </location>
</feature>
<feature type="sequence conflict" description="In Ref. 1; CAH93230." evidence="2" ref="1">
    <original>C</original>
    <variation>Y</variation>
    <location>
        <position position="470"/>
    </location>
</feature>
<feature type="sequence conflict" description="In Ref. 1; CAH93230." evidence="2" ref="1">
    <original>S</original>
    <variation>N</variation>
    <location>
        <position position="486"/>
    </location>
</feature>
<feature type="sequence conflict" description="In Ref. 1; CAH93230." evidence="2" ref="1">
    <original>I</original>
    <variation>T</variation>
    <location>
        <position position="514"/>
    </location>
</feature>
<feature type="sequence conflict" description="In Ref. 1; CAH93230." evidence="2" ref="1">
    <original>HI</original>
    <variation>QV</variation>
    <location>
        <begin position="551"/>
        <end position="552"/>
    </location>
</feature>
<sequence>MVMACRVVNKRRHMGLQQLSSFAETGRTFLGPLKSSKFIIDEECHESVLISSTVRLLESLDLTSAVGQLLNEAVQAQNNTYRTGISTLLFLVGAWSSAVEECLHLGVPISIIVSVMSEGLNFCSEEVVSLHVPVHNIFDCMDSTKTFSQLETFSVSLCPFLQVPSDTDLIEELHGLKDVASQTLTISNLSGRPLKSYELFKPQTKVEADNNTSRTLKNSLLADTCCRQSILIHSRHFNRTDNTEGVSKPDGFQEHVTATHKTYRCNDLVELAVGLSHGDHSSMKLVEEAVQLQYQNACVQQGNCTKPFMFDISRIFTCCLPGLPETSSCVCPGYITVVSVSNNPVIKELQNQPVRIVLIEGDLTENYRHLGFNKSANIKTVLDSMQLQEDSSEELWANHVLQVLIQFKVNLVLVQGNVSERLIEKCINSKRLVIGSVNGSVMQAFAEAAGAVQVAYITQVNEDCVGDGVCVTFWRSSPLDVVDRNSRIAILLKTEGINLVTAVLTNPVTAQMQIKEDRFWTCAYRLYYALKEEKVFLGGGAVEFLCLSCLHILAEQSLKKENHACSGWLHNTSSWLASSLAIYRPTVLKFLANGWQKYLSTLLYNTANYSSEFEASTYIQHHLQNATDSGSPSSYILNEYSKLNSRIFNSDISNKLEQIPRVYDVVTPKIEAWRRALDLVLLALQTDSEIITGHGHTQRNSQELTGFLFL</sequence>
<proteinExistence type="evidence at transcript level"/>